<accession>A1DL85</accession>
<dbReference type="EC" id="3.6.4.13"/>
<dbReference type="EMBL" id="DS027698">
    <property type="protein sequence ID" value="EAW15556.1"/>
    <property type="molecule type" value="Genomic_DNA"/>
</dbReference>
<dbReference type="RefSeq" id="XP_001257453.1">
    <property type="nucleotide sequence ID" value="XM_001257452.1"/>
</dbReference>
<dbReference type="SMR" id="A1DL85"/>
<dbReference type="STRING" id="331117.A1DL85"/>
<dbReference type="EnsemblFungi" id="EAW15556">
    <property type="protein sequence ID" value="EAW15556"/>
    <property type="gene ID" value="NFIA_048940"/>
</dbReference>
<dbReference type="GeneID" id="4583967"/>
<dbReference type="KEGG" id="nfi:NFIA_048940"/>
<dbReference type="VEuPathDB" id="FungiDB:NFIA_048940"/>
<dbReference type="eggNOG" id="KOG0329">
    <property type="taxonomic scope" value="Eukaryota"/>
</dbReference>
<dbReference type="HOGENOM" id="CLU_003041_1_0_1"/>
<dbReference type="OMA" id="YAHVEPK"/>
<dbReference type="OrthoDB" id="10265785at2759"/>
<dbReference type="Proteomes" id="UP000006702">
    <property type="component" value="Unassembled WGS sequence"/>
</dbReference>
<dbReference type="GO" id="GO:0000781">
    <property type="term" value="C:chromosome, telomeric region"/>
    <property type="evidence" value="ECO:0007669"/>
    <property type="project" value="EnsemblFungi"/>
</dbReference>
<dbReference type="GO" id="GO:0005681">
    <property type="term" value="C:spliceosomal complex"/>
    <property type="evidence" value="ECO:0007669"/>
    <property type="project" value="UniProtKB-KW"/>
</dbReference>
<dbReference type="GO" id="GO:0000346">
    <property type="term" value="C:transcription export complex"/>
    <property type="evidence" value="ECO:0007669"/>
    <property type="project" value="EnsemblFungi"/>
</dbReference>
<dbReference type="GO" id="GO:0005524">
    <property type="term" value="F:ATP binding"/>
    <property type="evidence" value="ECO:0007669"/>
    <property type="project" value="UniProtKB-KW"/>
</dbReference>
<dbReference type="GO" id="GO:0016887">
    <property type="term" value="F:ATP hydrolysis activity"/>
    <property type="evidence" value="ECO:0007669"/>
    <property type="project" value="RHEA"/>
</dbReference>
<dbReference type="GO" id="GO:0003723">
    <property type="term" value="F:RNA binding"/>
    <property type="evidence" value="ECO:0007669"/>
    <property type="project" value="UniProtKB-KW"/>
</dbReference>
<dbReference type="GO" id="GO:0003724">
    <property type="term" value="F:RNA helicase activity"/>
    <property type="evidence" value="ECO:0007669"/>
    <property type="project" value="UniProtKB-EC"/>
</dbReference>
<dbReference type="GO" id="GO:0031124">
    <property type="term" value="P:mRNA 3'-end processing"/>
    <property type="evidence" value="ECO:0007669"/>
    <property type="project" value="EnsemblFungi"/>
</dbReference>
<dbReference type="GO" id="GO:0006406">
    <property type="term" value="P:mRNA export from nucleus"/>
    <property type="evidence" value="ECO:0007669"/>
    <property type="project" value="EnsemblFungi"/>
</dbReference>
<dbReference type="GO" id="GO:0000398">
    <property type="term" value="P:mRNA splicing, via spliceosome"/>
    <property type="evidence" value="ECO:0007669"/>
    <property type="project" value="EnsemblFungi"/>
</dbReference>
<dbReference type="GO" id="GO:0031509">
    <property type="term" value="P:subtelomeric heterochromatin formation"/>
    <property type="evidence" value="ECO:0007669"/>
    <property type="project" value="EnsemblFungi"/>
</dbReference>
<dbReference type="GO" id="GO:0006368">
    <property type="term" value="P:transcription elongation by RNA polymerase II"/>
    <property type="evidence" value="ECO:0007669"/>
    <property type="project" value="EnsemblFungi"/>
</dbReference>
<dbReference type="GO" id="GO:0006283">
    <property type="term" value="P:transcription-coupled nucleotide-excision repair"/>
    <property type="evidence" value="ECO:0007669"/>
    <property type="project" value="EnsemblFungi"/>
</dbReference>
<dbReference type="CDD" id="cd17950">
    <property type="entry name" value="DEADc_DDX39"/>
    <property type="match status" value="1"/>
</dbReference>
<dbReference type="CDD" id="cd18787">
    <property type="entry name" value="SF2_C_DEAD"/>
    <property type="match status" value="1"/>
</dbReference>
<dbReference type="FunFam" id="3.40.50.300:FF:000111">
    <property type="entry name" value="DEAD-box ATP-dependent RNA helicase"/>
    <property type="match status" value="1"/>
</dbReference>
<dbReference type="FunFam" id="3.40.50.300:FF:000168">
    <property type="entry name" value="DEAD-box ATP-dependent RNA helicase 56-like"/>
    <property type="match status" value="1"/>
</dbReference>
<dbReference type="Gene3D" id="3.40.50.300">
    <property type="entry name" value="P-loop containing nucleotide triphosphate hydrolases"/>
    <property type="match status" value="2"/>
</dbReference>
<dbReference type="InterPro" id="IPR011545">
    <property type="entry name" value="DEAD/DEAH_box_helicase_dom"/>
</dbReference>
<dbReference type="InterPro" id="IPR014001">
    <property type="entry name" value="Helicase_ATP-bd"/>
</dbReference>
<dbReference type="InterPro" id="IPR001650">
    <property type="entry name" value="Helicase_C-like"/>
</dbReference>
<dbReference type="InterPro" id="IPR027417">
    <property type="entry name" value="P-loop_NTPase"/>
</dbReference>
<dbReference type="InterPro" id="IPR014014">
    <property type="entry name" value="RNA_helicase_DEAD_Q_motif"/>
</dbReference>
<dbReference type="PANTHER" id="PTHR47958">
    <property type="entry name" value="ATP-DEPENDENT RNA HELICASE DBP3"/>
    <property type="match status" value="1"/>
</dbReference>
<dbReference type="Pfam" id="PF00270">
    <property type="entry name" value="DEAD"/>
    <property type="match status" value="1"/>
</dbReference>
<dbReference type="Pfam" id="PF00271">
    <property type="entry name" value="Helicase_C"/>
    <property type="match status" value="1"/>
</dbReference>
<dbReference type="SMART" id="SM00487">
    <property type="entry name" value="DEXDc"/>
    <property type="match status" value="1"/>
</dbReference>
<dbReference type="SMART" id="SM00490">
    <property type="entry name" value="HELICc"/>
    <property type="match status" value="1"/>
</dbReference>
<dbReference type="SUPFAM" id="SSF52540">
    <property type="entry name" value="P-loop containing nucleoside triphosphate hydrolases"/>
    <property type="match status" value="1"/>
</dbReference>
<dbReference type="PROSITE" id="PS51192">
    <property type="entry name" value="HELICASE_ATP_BIND_1"/>
    <property type="match status" value="1"/>
</dbReference>
<dbReference type="PROSITE" id="PS51194">
    <property type="entry name" value="HELICASE_CTER"/>
    <property type="match status" value="1"/>
</dbReference>
<dbReference type="PROSITE" id="PS51195">
    <property type="entry name" value="Q_MOTIF"/>
    <property type="match status" value="1"/>
</dbReference>
<evidence type="ECO:0000250" key="1"/>
<evidence type="ECO:0000255" key="2">
    <source>
        <dbReference type="PROSITE-ProRule" id="PRU00541"/>
    </source>
</evidence>
<evidence type="ECO:0000255" key="3">
    <source>
        <dbReference type="PROSITE-ProRule" id="PRU00542"/>
    </source>
</evidence>
<evidence type="ECO:0000256" key="4">
    <source>
        <dbReference type="SAM" id="MobiDB-lite"/>
    </source>
</evidence>
<evidence type="ECO:0000305" key="5"/>
<sequence length="441" mass="49602">MSHEEDLIDYSDEELQTTDAAATTAAPAANGAQDKKGDLTVSGGRPDKKGSYVGIHSTGFRDFLLKGELLRAITDCGFEHPSEVQQVCIPTAILNVDVLCQAKSGLGKTAVFVLTTLHQLEPVPGECSVLVMCHTRELAYQIKNEYARFSKYLPDVKTAVFYGGTPIQKDIEVLSNKESYPNIVVGTPGRLNALVREKKLSLRNVKAFVLDECDKMLDQIDMRRDVQEIFRATPADKQVMMFSATLSQEIRPICKKFMRNPLEVYVDDDTKLTLHGLQQYYIKLSESEKNRKLNELLDSLEFNQVIIFVKSTLRANELDKLLRECNFPSIAVHSGVSQEERIKRYKEFKEFNKRICVATDVFGRGIDIERINLAINYDLPADADSYLHRVGRAGRFGTKGLSISFVSSEEDEKVLKEIEKRFEVALPEYPEGGVDSSTYMA</sequence>
<protein>
    <recommendedName>
        <fullName>ATP-dependent RNA helicase sub2</fullName>
        <ecNumber>3.6.4.13</ecNumber>
    </recommendedName>
</protein>
<gene>
    <name type="primary">sub2</name>
    <name type="ORF">NFIA_048940</name>
</gene>
<organism>
    <name type="scientific">Neosartorya fischeri (strain ATCC 1020 / DSM 3700 / CBS 544.65 / FGSC A1164 / JCM 1740 / NRRL 181 / WB 181)</name>
    <name type="common">Aspergillus fischerianus</name>
    <dbReference type="NCBI Taxonomy" id="331117"/>
    <lineage>
        <taxon>Eukaryota</taxon>
        <taxon>Fungi</taxon>
        <taxon>Dikarya</taxon>
        <taxon>Ascomycota</taxon>
        <taxon>Pezizomycotina</taxon>
        <taxon>Eurotiomycetes</taxon>
        <taxon>Eurotiomycetidae</taxon>
        <taxon>Eurotiales</taxon>
        <taxon>Aspergillaceae</taxon>
        <taxon>Aspergillus</taxon>
        <taxon>Aspergillus subgen. Fumigati</taxon>
    </lineage>
</organism>
<proteinExistence type="inferred from homology"/>
<keyword id="KW-0067">ATP-binding</keyword>
<keyword id="KW-0347">Helicase</keyword>
<keyword id="KW-0378">Hydrolase</keyword>
<keyword id="KW-0507">mRNA processing</keyword>
<keyword id="KW-0508">mRNA splicing</keyword>
<keyword id="KW-0509">mRNA transport</keyword>
<keyword id="KW-0547">Nucleotide-binding</keyword>
<keyword id="KW-0539">Nucleus</keyword>
<keyword id="KW-1185">Reference proteome</keyword>
<keyword id="KW-0694">RNA-binding</keyword>
<keyword id="KW-0747">Spliceosome</keyword>
<keyword id="KW-0813">Transport</keyword>
<comment type="function">
    <text evidence="1">ATP-binding RNA helicase involved in transcription elongation and required for the export of mRNA out of the nucleus. SUB2 also plays a role in pre-mRNA splicing and spliceosome assembly. May be involved in rDNA and telomeric silencing, and maintenance of genome integrity (By similarity).</text>
</comment>
<comment type="catalytic activity">
    <reaction>
        <text>ATP + H2O = ADP + phosphate + H(+)</text>
        <dbReference type="Rhea" id="RHEA:13065"/>
        <dbReference type="ChEBI" id="CHEBI:15377"/>
        <dbReference type="ChEBI" id="CHEBI:15378"/>
        <dbReference type="ChEBI" id="CHEBI:30616"/>
        <dbReference type="ChEBI" id="CHEBI:43474"/>
        <dbReference type="ChEBI" id="CHEBI:456216"/>
        <dbReference type="EC" id="3.6.4.13"/>
    </reaction>
</comment>
<comment type="subcellular location">
    <subcellularLocation>
        <location evidence="1">Nucleus</location>
    </subcellularLocation>
</comment>
<comment type="domain">
    <text>The Q motif is unique to and characteristic of the DEAD box family of RNA helicases and controls ATP binding and hydrolysis.</text>
</comment>
<comment type="similarity">
    <text evidence="5">Belongs to the DEAD box helicase family. DECD subfamily.</text>
</comment>
<name>SUB2_NEOFI</name>
<feature type="chain" id="PRO_0000282689" description="ATP-dependent RNA helicase sub2">
    <location>
        <begin position="1"/>
        <end position="441"/>
    </location>
</feature>
<feature type="domain" description="Helicase ATP-binding" evidence="2">
    <location>
        <begin position="89"/>
        <end position="264"/>
    </location>
</feature>
<feature type="domain" description="Helicase C-terminal" evidence="3">
    <location>
        <begin position="276"/>
        <end position="437"/>
    </location>
</feature>
<feature type="region of interest" description="Disordered" evidence="4">
    <location>
        <begin position="19"/>
        <end position="43"/>
    </location>
</feature>
<feature type="short sequence motif" description="Q motif">
    <location>
        <begin position="58"/>
        <end position="86"/>
    </location>
</feature>
<feature type="short sequence motif" description="DEAD box">
    <location>
        <begin position="211"/>
        <end position="214"/>
    </location>
</feature>
<feature type="compositionally biased region" description="Low complexity" evidence="4">
    <location>
        <begin position="19"/>
        <end position="29"/>
    </location>
</feature>
<feature type="binding site" evidence="2">
    <location>
        <begin position="102"/>
        <end position="109"/>
    </location>
    <ligand>
        <name>ATP</name>
        <dbReference type="ChEBI" id="CHEBI:30616"/>
    </ligand>
</feature>
<reference key="1">
    <citation type="journal article" date="2008" name="PLoS Genet.">
        <title>Genomic islands in the pathogenic filamentous fungus Aspergillus fumigatus.</title>
        <authorList>
            <person name="Fedorova N.D."/>
            <person name="Khaldi N."/>
            <person name="Joardar V.S."/>
            <person name="Maiti R."/>
            <person name="Amedeo P."/>
            <person name="Anderson M.J."/>
            <person name="Crabtree J."/>
            <person name="Silva J.C."/>
            <person name="Badger J.H."/>
            <person name="Albarraq A."/>
            <person name="Angiuoli S."/>
            <person name="Bussey H."/>
            <person name="Bowyer P."/>
            <person name="Cotty P.J."/>
            <person name="Dyer P.S."/>
            <person name="Egan A."/>
            <person name="Galens K."/>
            <person name="Fraser-Liggett C.M."/>
            <person name="Haas B.J."/>
            <person name="Inman J.M."/>
            <person name="Kent R."/>
            <person name="Lemieux S."/>
            <person name="Malavazi I."/>
            <person name="Orvis J."/>
            <person name="Roemer T."/>
            <person name="Ronning C.M."/>
            <person name="Sundaram J.P."/>
            <person name="Sutton G."/>
            <person name="Turner G."/>
            <person name="Venter J.C."/>
            <person name="White O.R."/>
            <person name="Whitty B.R."/>
            <person name="Youngman P."/>
            <person name="Wolfe K.H."/>
            <person name="Goldman G.H."/>
            <person name="Wortman J.R."/>
            <person name="Jiang B."/>
            <person name="Denning D.W."/>
            <person name="Nierman W.C."/>
        </authorList>
    </citation>
    <scope>NUCLEOTIDE SEQUENCE [LARGE SCALE GENOMIC DNA]</scope>
    <source>
        <strain>ATCC 1020 / DSM 3700 / CBS 544.65 / FGSC A1164 / JCM 1740 / NRRL 181 / WB 181</strain>
    </source>
</reference>